<gene>
    <name evidence="1" type="primary">sucC</name>
    <name type="ordered locus">SSON_0679</name>
</gene>
<organism>
    <name type="scientific">Shigella sonnei (strain Ss046)</name>
    <dbReference type="NCBI Taxonomy" id="300269"/>
    <lineage>
        <taxon>Bacteria</taxon>
        <taxon>Pseudomonadati</taxon>
        <taxon>Pseudomonadota</taxon>
        <taxon>Gammaproteobacteria</taxon>
        <taxon>Enterobacterales</taxon>
        <taxon>Enterobacteriaceae</taxon>
        <taxon>Shigella</taxon>
    </lineage>
</organism>
<feature type="chain" id="PRO_1000082235" description="Succinate--CoA ligase [ADP-forming] subunit beta">
    <location>
        <begin position="1"/>
        <end position="388"/>
    </location>
</feature>
<feature type="domain" description="ATP-grasp" evidence="1">
    <location>
        <begin position="9"/>
        <end position="244"/>
    </location>
</feature>
<feature type="binding site" evidence="1">
    <location>
        <position position="46"/>
    </location>
    <ligand>
        <name>ATP</name>
        <dbReference type="ChEBI" id="CHEBI:30616"/>
    </ligand>
</feature>
<feature type="binding site" evidence="1">
    <location>
        <begin position="53"/>
        <end position="55"/>
    </location>
    <ligand>
        <name>ATP</name>
        <dbReference type="ChEBI" id="CHEBI:30616"/>
    </ligand>
</feature>
<feature type="binding site" evidence="1">
    <location>
        <position position="99"/>
    </location>
    <ligand>
        <name>ATP</name>
        <dbReference type="ChEBI" id="CHEBI:30616"/>
    </ligand>
</feature>
<feature type="binding site" evidence="1">
    <location>
        <position position="102"/>
    </location>
    <ligand>
        <name>ATP</name>
        <dbReference type="ChEBI" id="CHEBI:30616"/>
    </ligand>
</feature>
<feature type="binding site" evidence="1">
    <location>
        <position position="107"/>
    </location>
    <ligand>
        <name>ATP</name>
        <dbReference type="ChEBI" id="CHEBI:30616"/>
    </ligand>
</feature>
<feature type="binding site" evidence="1">
    <location>
        <position position="199"/>
    </location>
    <ligand>
        <name>Mg(2+)</name>
        <dbReference type="ChEBI" id="CHEBI:18420"/>
    </ligand>
</feature>
<feature type="binding site" evidence="1">
    <location>
        <position position="213"/>
    </location>
    <ligand>
        <name>Mg(2+)</name>
        <dbReference type="ChEBI" id="CHEBI:18420"/>
    </ligand>
</feature>
<feature type="binding site" evidence="1">
    <location>
        <position position="264"/>
    </location>
    <ligand>
        <name>substrate</name>
        <note>ligand shared with subunit alpha</note>
    </ligand>
</feature>
<feature type="binding site" evidence="1">
    <location>
        <begin position="321"/>
        <end position="323"/>
    </location>
    <ligand>
        <name>substrate</name>
        <note>ligand shared with subunit alpha</note>
    </ligand>
</feature>
<dbReference type="EC" id="6.2.1.5" evidence="1"/>
<dbReference type="EMBL" id="CP000038">
    <property type="protein sequence ID" value="AAZ87436.1"/>
    <property type="molecule type" value="Genomic_DNA"/>
</dbReference>
<dbReference type="RefSeq" id="WP_001048602.1">
    <property type="nucleotide sequence ID" value="NC_007384.1"/>
</dbReference>
<dbReference type="SMR" id="Q3Z476"/>
<dbReference type="GeneID" id="93776757"/>
<dbReference type="KEGG" id="ssn:SSON_0679"/>
<dbReference type="HOGENOM" id="CLU_037430_4_0_6"/>
<dbReference type="UniPathway" id="UPA00223">
    <property type="reaction ID" value="UER00999"/>
</dbReference>
<dbReference type="Proteomes" id="UP000002529">
    <property type="component" value="Chromosome"/>
</dbReference>
<dbReference type="GO" id="GO:0005829">
    <property type="term" value="C:cytosol"/>
    <property type="evidence" value="ECO:0007669"/>
    <property type="project" value="TreeGrafter"/>
</dbReference>
<dbReference type="GO" id="GO:0042709">
    <property type="term" value="C:succinate-CoA ligase complex"/>
    <property type="evidence" value="ECO:0007669"/>
    <property type="project" value="TreeGrafter"/>
</dbReference>
<dbReference type="GO" id="GO:0005524">
    <property type="term" value="F:ATP binding"/>
    <property type="evidence" value="ECO:0007669"/>
    <property type="project" value="UniProtKB-UniRule"/>
</dbReference>
<dbReference type="GO" id="GO:0000287">
    <property type="term" value="F:magnesium ion binding"/>
    <property type="evidence" value="ECO:0007669"/>
    <property type="project" value="UniProtKB-UniRule"/>
</dbReference>
<dbReference type="GO" id="GO:0004775">
    <property type="term" value="F:succinate-CoA ligase (ADP-forming) activity"/>
    <property type="evidence" value="ECO:0007669"/>
    <property type="project" value="UniProtKB-UniRule"/>
</dbReference>
<dbReference type="GO" id="GO:0004776">
    <property type="term" value="F:succinate-CoA ligase (GDP-forming) activity"/>
    <property type="evidence" value="ECO:0007669"/>
    <property type="project" value="RHEA"/>
</dbReference>
<dbReference type="GO" id="GO:0006104">
    <property type="term" value="P:succinyl-CoA metabolic process"/>
    <property type="evidence" value="ECO:0007669"/>
    <property type="project" value="TreeGrafter"/>
</dbReference>
<dbReference type="GO" id="GO:0006099">
    <property type="term" value="P:tricarboxylic acid cycle"/>
    <property type="evidence" value="ECO:0007669"/>
    <property type="project" value="UniProtKB-UniRule"/>
</dbReference>
<dbReference type="FunFam" id="3.30.1490.20:FF:000002">
    <property type="entry name" value="Succinate--CoA ligase [ADP-forming] subunit beta"/>
    <property type="match status" value="1"/>
</dbReference>
<dbReference type="FunFam" id="3.30.470.20:FF:000002">
    <property type="entry name" value="Succinate--CoA ligase [ADP-forming] subunit beta"/>
    <property type="match status" value="1"/>
</dbReference>
<dbReference type="FunFam" id="3.40.50.261:FF:000001">
    <property type="entry name" value="Succinate--CoA ligase [ADP-forming] subunit beta"/>
    <property type="match status" value="1"/>
</dbReference>
<dbReference type="Gene3D" id="3.30.1490.20">
    <property type="entry name" value="ATP-grasp fold, A domain"/>
    <property type="match status" value="1"/>
</dbReference>
<dbReference type="Gene3D" id="3.30.470.20">
    <property type="entry name" value="ATP-grasp fold, B domain"/>
    <property type="match status" value="1"/>
</dbReference>
<dbReference type="Gene3D" id="3.40.50.261">
    <property type="entry name" value="Succinyl-CoA synthetase domains"/>
    <property type="match status" value="1"/>
</dbReference>
<dbReference type="HAMAP" id="MF_00558">
    <property type="entry name" value="Succ_CoA_beta"/>
    <property type="match status" value="1"/>
</dbReference>
<dbReference type="InterPro" id="IPR011761">
    <property type="entry name" value="ATP-grasp"/>
</dbReference>
<dbReference type="InterPro" id="IPR013650">
    <property type="entry name" value="ATP-grasp_succ-CoA_synth-type"/>
</dbReference>
<dbReference type="InterPro" id="IPR013815">
    <property type="entry name" value="ATP_grasp_subdomain_1"/>
</dbReference>
<dbReference type="InterPro" id="IPR017866">
    <property type="entry name" value="Succ-CoA_synthase_bsu_CS"/>
</dbReference>
<dbReference type="InterPro" id="IPR005811">
    <property type="entry name" value="SUCC_ACL_C"/>
</dbReference>
<dbReference type="InterPro" id="IPR005809">
    <property type="entry name" value="Succ_CoA_ligase-like_bsu"/>
</dbReference>
<dbReference type="InterPro" id="IPR016102">
    <property type="entry name" value="Succinyl-CoA_synth-like"/>
</dbReference>
<dbReference type="NCBIfam" id="NF001913">
    <property type="entry name" value="PRK00696.1"/>
    <property type="match status" value="1"/>
</dbReference>
<dbReference type="NCBIfam" id="TIGR01016">
    <property type="entry name" value="sucCoAbeta"/>
    <property type="match status" value="1"/>
</dbReference>
<dbReference type="PANTHER" id="PTHR11815:SF10">
    <property type="entry name" value="SUCCINATE--COA LIGASE [GDP-FORMING] SUBUNIT BETA, MITOCHONDRIAL"/>
    <property type="match status" value="1"/>
</dbReference>
<dbReference type="PANTHER" id="PTHR11815">
    <property type="entry name" value="SUCCINYL-COA SYNTHETASE BETA CHAIN"/>
    <property type="match status" value="1"/>
</dbReference>
<dbReference type="Pfam" id="PF08442">
    <property type="entry name" value="ATP-grasp_2"/>
    <property type="match status" value="1"/>
</dbReference>
<dbReference type="Pfam" id="PF00549">
    <property type="entry name" value="Ligase_CoA"/>
    <property type="match status" value="1"/>
</dbReference>
<dbReference type="PIRSF" id="PIRSF001554">
    <property type="entry name" value="SucCS_beta"/>
    <property type="match status" value="1"/>
</dbReference>
<dbReference type="SUPFAM" id="SSF56059">
    <property type="entry name" value="Glutathione synthetase ATP-binding domain-like"/>
    <property type="match status" value="1"/>
</dbReference>
<dbReference type="SUPFAM" id="SSF52210">
    <property type="entry name" value="Succinyl-CoA synthetase domains"/>
    <property type="match status" value="1"/>
</dbReference>
<dbReference type="PROSITE" id="PS50975">
    <property type="entry name" value="ATP_GRASP"/>
    <property type="match status" value="1"/>
</dbReference>
<dbReference type="PROSITE" id="PS01217">
    <property type="entry name" value="SUCCINYL_COA_LIG_3"/>
    <property type="match status" value="1"/>
</dbReference>
<sequence>MNLHEYQAKQLFARYGLPAPVGYACTTPREAEEAASKIGAGPWVVKCQVHAGGRGKAGGVKVVNSKEDIRAFAENWLGKRLVTYQTDANGQPVNQILVEAATDIAKELYLGAVVDRSSRRVVFMASTEGGVEIEKVAEETPHLIHKVALDPLTGPMPYQGRELAFKLGLEGKLVQQFTKIFMGLATIFLERDLALIEINPLVITKQGDLICLDGKLGADGNALFRQPDLREMRDQSQEDPREAQAAQWELNYVALDGNIGCMVNGAGLAMGTMDIVKLHGGEPANFLDVGGGATKERVTEAFKIILSDDKVKAVLVNIFGGIVRCDLIADGIIGAVAEVGVNVPVVVRLEGNNAELGAKKLADSGLNIIAAKGLTDAAQQVVAAVEGK</sequence>
<accession>Q3Z476</accession>
<reference key="1">
    <citation type="journal article" date="2005" name="Nucleic Acids Res.">
        <title>Genome dynamics and diversity of Shigella species, the etiologic agents of bacillary dysentery.</title>
        <authorList>
            <person name="Yang F."/>
            <person name="Yang J."/>
            <person name="Zhang X."/>
            <person name="Chen L."/>
            <person name="Jiang Y."/>
            <person name="Yan Y."/>
            <person name="Tang X."/>
            <person name="Wang J."/>
            <person name="Xiong Z."/>
            <person name="Dong J."/>
            <person name="Xue Y."/>
            <person name="Zhu Y."/>
            <person name="Xu X."/>
            <person name="Sun L."/>
            <person name="Chen S."/>
            <person name="Nie H."/>
            <person name="Peng J."/>
            <person name="Xu J."/>
            <person name="Wang Y."/>
            <person name="Yuan Z."/>
            <person name="Wen Y."/>
            <person name="Yao Z."/>
            <person name="Shen Y."/>
            <person name="Qiang B."/>
            <person name="Hou Y."/>
            <person name="Yu J."/>
            <person name="Jin Q."/>
        </authorList>
    </citation>
    <scope>NUCLEOTIDE SEQUENCE [LARGE SCALE GENOMIC DNA]</scope>
    <source>
        <strain>Ss046</strain>
    </source>
</reference>
<name>SUCC_SHISS</name>
<protein>
    <recommendedName>
        <fullName evidence="1">Succinate--CoA ligase [ADP-forming] subunit beta</fullName>
        <ecNumber evidence="1">6.2.1.5</ecNumber>
    </recommendedName>
    <alternativeName>
        <fullName evidence="1">Succinyl-CoA synthetase subunit beta</fullName>
        <shortName evidence="1">SCS-beta</shortName>
    </alternativeName>
</protein>
<comment type="function">
    <text evidence="1">Succinyl-CoA synthetase functions in the citric acid cycle (TCA), coupling the hydrolysis of succinyl-CoA to the synthesis of either ATP or GTP and thus represents the only step of substrate-level phosphorylation in the TCA. The beta subunit provides nucleotide specificity of the enzyme and binds the substrate succinate, while the binding sites for coenzyme A and phosphate are found in the alpha subunit.</text>
</comment>
<comment type="catalytic activity">
    <reaction evidence="1">
        <text>succinate + ATP + CoA = succinyl-CoA + ADP + phosphate</text>
        <dbReference type="Rhea" id="RHEA:17661"/>
        <dbReference type="ChEBI" id="CHEBI:30031"/>
        <dbReference type="ChEBI" id="CHEBI:30616"/>
        <dbReference type="ChEBI" id="CHEBI:43474"/>
        <dbReference type="ChEBI" id="CHEBI:57287"/>
        <dbReference type="ChEBI" id="CHEBI:57292"/>
        <dbReference type="ChEBI" id="CHEBI:456216"/>
        <dbReference type="EC" id="6.2.1.5"/>
    </reaction>
    <physiologicalReaction direction="right-to-left" evidence="1">
        <dbReference type="Rhea" id="RHEA:17663"/>
    </physiologicalReaction>
</comment>
<comment type="catalytic activity">
    <reaction evidence="1">
        <text>GTP + succinate + CoA = succinyl-CoA + GDP + phosphate</text>
        <dbReference type="Rhea" id="RHEA:22120"/>
        <dbReference type="ChEBI" id="CHEBI:30031"/>
        <dbReference type="ChEBI" id="CHEBI:37565"/>
        <dbReference type="ChEBI" id="CHEBI:43474"/>
        <dbReference type="ChEBI" id="CHEBI:57287"/>
        <dbReference type="ChEBI" id="CHEBI:57292"/>
        <dbReference type="ChEBI" id="CHEBI:58189"/>
    </reaction>
    <physiologicalReaction direction="right-to-left" evidence="1">
        <dbReference type="Rhea" id="RHEA:22122"/>
    </physiologicalReaction>
</comment>
<comment type="cofactor">
    <cofactor evidence="1">
        <name>Mg(2+)</name>
        <dbReference type="ChEBI" id="CHEBI:18420"/>
    </cofactor>
    <text evidence="1">Binds 1 Mg(2+) ion per subunit.</text>
</comment>
<comment type="pathway">
    <text evidence="1">Carbohydrate metabolism; tricarboxylic acid cycle; succinate from succinyl-CoA (ligase route): step 1/1.</text>
</comment>
<comment type="subunit">
    <text evidence="1">Heterotetramer of two alpha and two beta subunits.</text>
</comment>
<comment type="similarity">
    <text evidence="1">Belongs to the succinate/malate CoA ligase beta subunit family.</text>
</comment>
<evidence type="ECO:0000255" key="1">
    <source>
        <dbReference type="HAMAP-Rule" id="MF_00558"/>
    </source>
</evidence>
<keyword id="KW-0067">ATP-binding</keyword>
<keyword id="KW-0436">Ligase</keyword>
<keyword id="KW-0460">Magnesium</keyword>
<keyword id="KW-0479">Metal-binding</keyword>
<keyword id="KW-0547">Nucleotide-binding</keyword>
<keyword id="KW-1185">Reference proteome</keyword>
<keyword id="KW-0816">Tricarboxylic acid cycle</keyword>
<proteinExistence type="inferred from homology"/>